<keyword id="KW-0130">Cell adhesion</keyword>
<keyword id="KW-1003">Cell membrane</keyword>
<keyword id="KW-1015">Disulfide bond</keyword>
<keyword id="KW-0318">Glutathionylation</keyword>
<keyword id="KW-0325">Glycoprotein</keyword>
<keyword id="KW-0391">Immunity</keyword>
<keyword id="KW-0399">Innate immunity</keyword>
<keyword id="KW-0406">Ion transport</keyword>
<keyword id="KW-0472">Membrane</keyword>
<keyword id="KW-0597">Phosphoprotein</keyword>
<keyword id="KW-0630">Potassium</keyword>
<keyword id="KW-0633">Potassium transport</keyword>
<keyword id="KW-1185">Reference proteome</keyword>
<keyword id="KW-0735">Signal-anchor</keyword>
<keyword id="KW-0915">Sodium</keyword>
<keyword id="KW-0739">Sodium transport</keyword>
<keyword id="KW-0740">Sodium/potassium transport</keyword>
<keyword id="KW-0812">Transmembrane</keyword>
<keyword id="KW-1133">Transmembrane helix</keyword>
<keyword id="KW-0813">Transport</keyword>
<gene>
    <name type="primary">ATP1B1</name>
</gene>
<comment type="function">
    <text evidence="2">This is the non-catalytic component of the active enzyme, which catalyzes the hydrolysis of ATP coupled with the exchange of Na(+) and K(+) ions across the plasma membrane. The beta subunit regulates, through assembly of alpha/beta heterodimers, the number of sodium pumps transported to the plasma membrane. Plays a role in innate immunity by enhancing virus-triggered induction of interferons (IFNs) and interferon stimulated genes (ISGs). Mechanistically, enhances the ubiquitination of TRAF3 and TRAF6 as well as the phosphorylation of TAK1 and TBK1.</text>
</comment>
<comment type="function">
    <text evidence="2">Involved in cell adhesion and establishing epithelial cell polarity.</text>
</comment>
<comment type="subunit">
    <text evidence="2 3 4">The sodium/potassium-transporting ATPase is composed of a catalytic alpha subunit, an auxiliary non-catalytic beta subunit and an additional regulatory subunit. Interacts with catalytic subunit ATP12A (By similarity). Interacts with regulatory subunit FXYD1 (By similarity). Interacts with regulatory subunit FXYD3 (By similarity). Interacts with NKAIN1, NKAIN2 and NKAIN4 (By similarity). Interacts with MLC1. Part of a complex containing MLC1, TRPV4, AQP4 and HEPACAM. Interacts with KIRREL3 (By similarity). Interacts with OBSCN (via protein kinase domain 1) (By similarity). Interacts with TRAF3 and TRAF6 (By similarity).</text>
</comment>
<comment type="subcellular location">
    <subcellularLocation>
        <location evidence="5">Cell membrane</location>
        <topology evidence="5">Single-pass type II membrane protein</topology>
    </subcellularLocation>
    <subcellularLocation>
        <location evidence="3">Apical cell membrane</location>
        <topology evidence="5">Single-pass type II membrane protein</topology>
    </subcellularLocation>
    <subcellularLocation>
        <location evidence="4">Cell membrane</location>
        <location evidence="4">Sarcolemma</location>
    </subcellularLocation>
    <text evidence="4">Colocalizes with OBSCN at the intercalated disk and sarcolemma in cardiomyocytes. Localizes in long striations at the level of Z and M lines.</text>
</comment>
<comment type="domain">
    <text evidence="1">The C-terminal lobe folds into an immunoglobulin-like domain and mediates cell adhesion properties.</text>
</comment>
<comment type="PTM">
    <text evidence="3 4">Glutathionylated (By similarity). N-glycosylated (By similarity).</text>
</comment>
<comment type="similarity">
    <text evidence="6">Belongs to the X(+)/potassium ATPases subunit beta family.</text>
</comment>
<protein>
    <recommendedName>
        <fullName>Sodium/potassium-transporting ATPase subunit beta-1</fullName>
    </recommendedName>
    <alternativeName>
        <fullName>Sodium/potassium-dependent ATPase subunit beta-1</fullName>
    </alternativeName>
</protein>
<name>AT1B1_PONAB</name>
<feature type="chain" id="PRO_0000265957" description="Sodium/potassium-transporting ATPase subunit beta-1">
    <location>
        <begin position="1"/>
        <end position="303"/>
    </location>
</feature>
<feature type="topological domain" description="Cytoplasmic" evidence="5">
    <location>
        <begin position="1"/>
        <end position="34"/>
    </location>
</feature>
<feature type="transmembrane region" description="Helical; Signal-anchor for type II membrane protein" evidence="5">
    <location>
        <begin position="35"/>
        <end position="62"/>
    </location>
</feature>
<feature type="topological domain" description="Extracellular" evidence="5">
    <location>
        <begin position="63"/>
        <end position="303"/>
    </location>
</feature>
<feature type="region of interest" description="immunoglobulin-like" evidence="1">
    <location>
        <begin position="191"/>
        <end position="303"/>
    </location>
</feature>
<feature type="modified residue" description="Phosphoserine" evidence="3">
    <location>
        <position position="11"/>
    </location>
</feature>
<feature type="modified residue" description="Phosphotyrosine" evidence="4">
    <location>
        <position position="101"/>
    </location>
</feature>
<feature type="glycosylation site" description="N-linked (GlcNAc...) asparagine" evidence="5">
    <location>
        <position position="158"/>
    </location>
</feature>
<feature type="glycosylation site" description="N-linked (GlcNAc...) asparagine" evidence="5">
    <location>
        <position position="193"/>
    </location>
</feature>
<feature type="glycosylation site" description="N-linked (GlcNAc...) asparagine" evidence="5">
    <location>
        <position position="265"/>
    </location>
</feature>
<feature type="disulfide bond" evidence="1">
    <location>
        <begin position="126"/>
        <end position="149"/>
    </location>
</feature>
<feature type="disulfide bond" evidence="1">
    <location>
        <begin position="159"/>
        <end position="175"/>
    </location>
</feature>
<feature type="disulfide bond" evidence="1">
    <location>
        <begin position="213"/>
        <end position="276"/>
    </location>
</feature>
<evidence type="ECO:0000250" key="1"/>
<evidence type="ECO:0000250" key="2">
    <source>
        <dbReference type="UniProtKB" id="P05026"/>
    </source>
</evidence>
<evidence type="ECO:0000250" key="3">
    <source>
        <dbReference type="UniProtKB" id="P07340"/>
    </source>
</evidence>
<evidence type="ECO:0000250" key="4">
    <source>
        <dbReference type="UniProtKB" id="P14094"/>
    </source>
</evidence>
<evidence type="ECO:0000255" key="5"/>
<evidence type="ECO:0000305" key="6"/>
<reference key="1">
    <citation type="submission" date="2004-11" db="EMBL/GenBank/DDBJ databases">
        <authorList>
            <consortium name="The German cDNA consortium"/>
        </authorList>
    </citation>
    <scope>NUCLEOTIDE SEQUENCE [LARGE SCALE MRNA]</scope>
    <source>
        <tissue>Brain cortex</tissue>
    </source>
</reference>
<sequence length="303" mass="35075">MARGKAKEEGSWKKFIWNSEKKEFLGRTGGSWFKILLFYVIFYGCLAGIFIGTIQVMLLTISEFKPTYQDRVAPPGLTQIPQIQKTEISFRPNDPKSYEAYVLNIVRFLEKYKDSAQRDDMIFEDCGDVPSEPKERGDFNHERGERKVCRFKLEWLGNCSGLNDETYGYKEGKPCIIIKLNRVLGFKPKPPKNESLETYPVMKYNPNVLPVQCTGKRDEDKDKIGNVEYFGLGNSPGFPLQYYPYYGKLLQPKYLQPLLAVQFTNLTMDTEIRIECKAYGENIGYSEKDRFQGRFDVKIEVKS</sequence>
<organism>
    <name type="scientific">Pongo abelii</name>
    <name type="common">Sumatran orangutan</name>
    <name type="synonym">Pongo pygmaeus abelii</name>
    <dbReference type="NCBI Taxonomy" id="9601"/>
    <lineage>
        <taxon>Eukaryota</taxon>
        <taxon>Metazoa</taxon>
        <taxon>Chordata</taxon>
        <taxon>Craniata</taxon>
        <taxon>Vertebrata</taxon>
        <taxon>Euteleostomi</taxon>
        <taxon>Mammalia</taxon>
        <taxon>Eutheria</taxon>
        <taxon>Euarchontoglires</taxon>
        <taxon>Primates</taxon>
        <taxon>Haplorrhini</taxon>
        <taxon>Catarrhini</taxon>
        <taxon>Hominidae</taxon>
        <taxon>Pongo</taxon>
    </lineage>
</organism>
<proteinExistence type="evidence at transcript level"/>
<accession>Q5R8S8</accession>
<dbReference type="EMBL" id="CR859671">
    <property type="protein sequence ID" value="CAH91832.1"/>
    <property type="molecule type" value="mRNA"/>
</dbReference>
<dbReference type="RefSeq" id="NP_001126059.1">
    <property type="nucleotide sequence ID" value="NM_001132587.1"/>
</dbReference>
<dbReference type="SMR" id="Q5R8S8"/>
<dbReference type="FunCoup" id="Q5R8S8">
    <property type="interactions" value="1170"/>
</dbReference>
<dbReference type="STRING" id="9601.ENSPPYP00000000625"/>
<dbReference type="GlyCosmos" id="Q5R8S8">
    <property type="glycosylation" value="3 sites, No reported glycans"/>
</dbReference>
<dbReference type="Ensembl" id="ENSPPYT00000000650.3">
    <property type="protein sequence ID" value="ENSPPYP00000000625.2"/>
    <property type="gene ID" value="ENSPPYG00000000536.3"/>
</dbReference>
<dbReference type="GeneID" id="100173011"/>
<dbReference type="KEGG" id="pon:100173011"/>
<dbReference type="CTD" id="481"/>
<dbReference type="eggNOG" id="KOG3927">
    <property type="taxonomic scope" value="Eukaryota"/>
</dbReference>
<dbReference type="GeneTree" id="ENSGT01030000234579"/>
<dbReference type="HOGENOM" id="CLU_057702_2_0_1"/>
<dbReference type="InParanoid" id="Q5R8S8"/>
<dbReference type="OMA" id="WEGFRVF"/>
<dbReference type="OrthoDB" id="5912413at2759"/>
<dbReference type="TreeFam" id="TF314618"/>
<dbReference type="Proteomes" id="UP000001595">
    <property type="component" value="Chromosome 1"/>
</dbReference>
<dbReference type="GO" id="GO:0016324">
    <property type="term" value="C:apical plasma membrane"/>
    <property type="evidence" value="ECO:0000250"/>
    <property type="project" value="UniProtKB"/>
</dbReference>
<dbReference type="GO" id="GO:0016323">
    <property type="term" value="C:basolateral plasma membrane"/>
    <property type="evidence" value="ECO:0007669"/>
    <property type="project" value="Ensembl"/>
</dbReference>
<dbReference type="GO" id="GO:0014704">
    <property type="term" value="C:intercalated disc"/>
    <property type="evidence" value="ECO:0007669"/>
    <property type="project" value="Ensembl"/>
</dbReference>
<dbReference type="GO" id="GO:0016328">
    <property type="term" value="C:lateral plasma membrane"/>
    <property type="evidence" value="ECO:0007669"/>
    <property type="project" value="Ensembl"/>
</dbReference>
<dbReference type="GO" id="GO:0031090">
    <property type="term" value="C:organelle membrane"/>
    <property type="evidence" value="ECO:0007669"/>
    <property type="project" value="Ensembl"/>
</dbReference>
<dbReference type="GO" id="GO:0005890">
    <property type="term" value="C:sodium:potassium-exchanging ATPase complex"/>
    <property type="evidence" value="ECO:0007669"/>
    <property type="project" value="Ensembl"/>
</dbReference>
<dbReference type="GO" id="GO:0036126">
    <property type="term" value="C:sperm flagellum"/>
    <property type="evidence" value="ECO:0007669"/>
    <property type="project" value="Ensembl"/>
</dbReference>
<dbReference type="GO" id="GO:0030315">
    <property type="term" value="C:T-tubule"/>
    <property type="evidence" value="ECO:0007669"/>
    <property type="project" value="Ensembl"/>
</dbReference>
<dbReference type="GO" id="GO:0001671">
    <property type="term" value="F:ATPase activator activity"/>
    <property type="evidence" value="ECO:0007669"/>
    <property type="project" value="Ensembl"/>
</dbReference>
<dbReference type="GO" id="GO:0051117">
    <property type="term" value="F:ATPase binding"/>
    <property type="evidence" value="ECO:0007669"/>
    <property type="project" value="Ensembl"/>
</dbReference>
<dbReference type="GO" id="GO:0005391">
    <property type="term" value="F:P-type sodium:potassium-exchanging transporter activity"/>
    <property type="evidence" value="ECO:0007669"/>
    <property type="project" value="Ensembl"/>
</dbReference>
<dbReference type="GO" id="GO:0019901">
    <property type="term" value="F:protein kinase binding"/>
    <property type="evidence" value="ECO:0007669"/>
    <property type="project" value="Ensembl"/>
</dbReference>
<dbReference type="GO" id="GO:0030674">
    <property type="term" value="F:protein-macromolecule adaptor activity"/>
    <property type="evidence" value="ECO:0007669"/>
    <property type="project" value="Ensembl"/>
</dbReference>
<dbReference type="GO" id="GO:0141109">
    <property type="term" value="F:transporter activator activity"/>
    <property type="evidence" value="ECO:0007669"/>
    <property type="project" value="Ensembl"/>
</dbReference>
<dbReference type="GO" id="GO:0046034">
    <property type="term" value="P:ATP metabolic process"/>
    <property type="evidence" value="ECO:0007669"/>
    <property type="project" value="Ensembl"/>
</dbReference>
<dbReference type="GO" id="GO:0060048">
    <property type="term" value="P:cardiac muscle contraction"/>
    <property type="evidence" value="ECO:0007669"/>
    <property type="project" value="Ensembl"/>
</dbReference>
<dbReference type="GO" id="GO:0007155">
    <property type="term" value="P:cell adhesion"/>
    <property type="evidence" value="ECO:0007669"/>
    <property type="project" value="UniProtKB-KW"/>
</dbReference>
<dbReference type="GO" id="GO:0045087">
    <property type="term" value="P:innate immune response"/>
    <property type="evidence" value="ECO:0007669"/>
    <property type="project" value="UniProtKB-KW"/>
</dbReference>
<dbReference type="GO" id="GO:0006874">
    <property type="term" value="P:intracellular calcium ion homeostasis"/>
    <property type="evidence" value="ECO:0007669"/>
    <property type="project" value="Ensembl"/>
</dbReference>
<dbReference type="GO" id="GO:0030007">
    <property type="term" value="P:intracellular potassium ion homeostasis"/>
    <property type="evidence" value="ECO:0007669"/>
    <property type="project" value="Ensembl"/>
</dbReference>
<dbReference type="GO" id="GO:0006883">
    <property type="term" value="P:intracellular sodium ion homeostasis"/>
    <property type="evidence" value="ECO:0007669"/>
    <property type="project" value="Ensembl"/>
</dbReference>
<dbReference type="GO" id="GO:0086009">
    <property type="term" value="P:membrane repolarization"/>
    <property type="evidence" value="ECO:0007669"/>
    <property type="project" value="Ensembl"/>
</dbReference>
<dbReference type="GO" id="GO:1903288">
    <property type="term" value="P:positive regulation of potassium ion import across plasma membrane"/>
    <property type="evidence" value="ECO:0007669"/>
    <property type="project" value="Ensembl"/>
</dbReference>
<dbReference type="GO" id="GO:1903278">
    <property type="term" value="P:positive regulation of sodium ion export across plasma membrane"/>
    <property type="evidence" value="ECO:0007669"/>
    <property type="project" value="Ensembl"/>
</dbReference>
<dbReference type="GO" id="GO:1990573">
    <property type="term" value="P:potassium ion import across plasma membrane"/>
    <property type="evidence" value="ECO:0007669"/>
    <property type="project" value="Ensembl"/>
</dbReference>
<dbReference type="GO" id="GO:0072659">
    <property type="term" value="P:protein localization to plasma membrane"/>
    <property type="evidence" value="ECO:0007669"/>
    <property type="project" value="Ensembl"/>
</dbReference>
<dbReference type="GO" id="GO:0050821">
    <property type="term" value="P:protein stabilization"/>
    <property type="evidence" value="ECO:0007669"/>
    <property type="project" value="Ensembl"/>
</dbReference>
<dbReference type="GO" id="GO:1903169">
    <property type="term" value="P:regulation of calcium ion transmembrane transport"/>
    <property type="evidence" value="ECO:0007669"/>
    <property type="project" value="Ensembl"/>
</dbReference>
<dbReference type="GO" id="GO:0010882">
    <property type="term" value="P:regulation of cardiac muscle contraction by calcium ion signaling"/>
    <property type="evidence" value="ECO:0007669"/>
    <property type="project" value="Ensembl"/>
</dbReference>
<dbReference type="GO" id="GO:0010468">
    <property type="term" value="P:regulation of gene expression"/>
    <property type="evidence" value="ECO:0007669"/>
    <property type="project" value="Ensembl"/>
</dbReference>
<dbReference type="GO" id="GO:0055119">
    <property type="term" value="P:relaxation of cardiac muscle"/>
    <property type="evidence" value="ECO:0007669"/>
    <property type="project" value="Ensembl"/>
</dbReference>
<dbReference type="GO" id="GO:0036376">
    <property type="term" value="P:sodium ion export across plasma membrane"/>
    <property type="evidence" value="ECO:0007669"/>
    <property type="project" value="Ensembl"/>
</dbReference>
<dbReference type="FunFam" id="1.20.5.170:FF:000062">
    <property type="entry name" value="Sodium/potassium-transporting ATPase subunit beta"/>
    <property type="match status" value="1"/>
</dbReference>
<dbReference type="FunFam" id="2.60.40.1660:FF:000002">
    <property type="entry name" value="Sodium/potassium-transporting ATPase subunit beta"/>
    <property type="match status" value="1"/>
</dbReference>
<dbReference type="Gene3D" id="1.20.5.170">
    <property type="match status" value="1"/>
</dbReference>
<dbReference type="Gene3D" id="2.60.40.1660">
    <property type="entry name" value="Na, k-atpase alpha subunit"/>
    <property type="match status" value="1"/>
</dbReference>
<dbReference type="InterPro" id="IPR000402">
    <property type="entry name" value="Na/K_ATPase_sub_beta"/>
</dbReference>
<dbReference type="InterPro" id="IPR038702">
    <property type="entry name" value="Na/K_ATPase_sub_beta_sf"/>
</dbReference>
<dbReference type="NCBIfam" id="TIGR01107">
    <property type="entry name" value="Na_K_ATPase_bet"/>
    <property type="match status" value="1"/>
</dbReference>
<dbReference type="PANTHER" id="PTHR11523">
    <property type="entry name" value="SODIUM/POTASSIUM-DEPENDENT ATPASE BETA SUBUNIT"/>
    <property type="match status" value="1"/>
</dbReference>
<dbReference type="PANTHER" id="PTHR11523:SF10">
    <property type="entry name" value="SODIUM_POTASSIUM-TRANSPORTING ATPASE SUBUNIT BETA-1"/>
    <property type="match status" value="1"/>
</dbReference>
<dbReference type="Pfam" id="PF00287">
    <property type="entry name" value="Na_K-ATPase"/>
    <property type="match status" value="1"/>
</dbReference>
<dbReference type="PROSITE" id="PS00390">
    <property type="entry name" value="ATPASE_NA_K_BETA_1"/>
    <property type="match status" value="1"/>
</dbReference>
<dbReference type="PROSITE" id="PS00391">
    <property type="entry name" value="ATPASE_NA_K_BETA_2"/>
    <property type="match status" value="1"/>
</dbReference>